<organism>
    <name type="scientific">Bartonella tribocorum (strain CIP 105476 / IBS 506)</name>
    <dbReference type="NCBI Taxonomy" id="382640"/>
    <lineage>
        <taxon>Bacteria</taxon>
        <taxon>Pseudomonadati</taxon>
        <taxon>Pseudomonadota</taxon>
        <taxon>Alphaproteobacteria</taxon>
        <taxon>Hyphomicrobiales</taxon>
        <taxon>Bartonellaceae</taxon>
        <taxon>Bartonella</taxon>
    </lineage>
</organism>
<reference key="1">
    <citation type="journal article" date="2007" name="Nat. Genet.">
        <title>Genomic analysis of Bartonella identifies type IV secretion systems as host adaptability factors.</title>
        <authorList>
            <person name="Saenz H.L."/>
            <person name="Engel P."/>
            <person name="Stoeckli M.C."/>
            <person name="Lanz C."/>
            <person name="Raddatz G."/>
            <person name="Vayssier-Taussat M."/>
            <person name="Birtles R."/>
            <person name="Schuster S.C."/>
            <person name="Dehio C."/>
        </authorList>
    </citation>
    <scope>NUCLEOTIDE SEQUENCE [LARGE SCALE GENOMIC DNA]</scope>
    <source>
        <strain>CIP 105476 / IBS 506</strain>
    </source>
</reference>
<protein>
    <recommendedName>
        <fullName evidence="1">DNA-directed RNA polymerase subunit beta</fullName>
        <shortName evidence="1">RNAP subunit beta</shortName>
        <ecNumber evidence="1">2.7.7.6</ecNumber>
    </recommendedName>
    <alternativeName>
        <fullName evidence="1">RNA polymerase subunit beta</fullName>
    </alternativeName>
    <alternativeName>
        <fullName evidence="1">Transcriptase subunit beta</fullName>
    </alternativeName>
</protein>
<proteinExistence type="inferred from homology"/>
<name>RPOB_BART1</name>
<gene>
    <name evidence="1" type="primary">rpoB</name>
    <name type="ordered locus">BT_0895</name>
</gene>
<keyword id="KW-0240">DNA-directed RNA polymerase</keyword>
<keyword id="KW-0548">Nucleotidyltransferase</keyword>
<keyword id="KW-0804">Transcription</keyword>
<keyword id="KW-0808">Transferase</keyword>
<evidence type="ECO:0000255" key="1">
    <source>
        <dbReference type="HAMAP-Rule" id="MF_01321"/>
    </source>
</evidence>
<comment type="function">
    <text evidence="1">DNA-dependent RNA polymerase catalyzes the transcription of DNA into RNA using the four ribonucleoside triphosphates as substrates.</text>
</comment>
<comment type="catalytic activity">
    <reaction evidence="1">
        <text>RNA(n) + a ribonucleoside 5'-triphosphate = RNA(n+1) + diphosphate</text>
        <dbReference type="Rhea" id="RHEA:21248"/>
        <dbReference type="Rhea" id="RHEA-COMP:14527"/>
        <dbReference type="Rhea" id="RHEA-COMP:17342"/>
        <dbReference type="ChEBI" id="CHEBI:33019"/>
        <dbReference type="ChEBI" id="CHEBI:61557"/>
        <dbReference type="ChEBI" id="CHEBI:140395"/>
        <dbReference type="EC" id="2.7.7.6"/>
    </reaction>
</comment>
<comment type="subunit">
    <text evidence="1">The RNAP catalytic core consists of 2 alpha, 1 beta, 1 beta' and 1 omega subunit. When a sigma factor is associated with the core the holoenzyme is formed, which can initiate transcription.</text>
</comment>
<comment type="similarity">
    <text evidence="1">Belongs to the RNA polymerase beta chain family.</text>
</comment>
<sequence length="1383" mass="155049">MAQTHAMMSQFNGRKRVRKFFGKIPEVAEMPNLIEVQKASYDQFLMIEEPKGGRPDEGLQAVFKSVFPISDFSGTAMLEFVGYEFDLPKFDVEECRQRDLTYAAPLKVILRLIVFDIDEDTGSKDIKDIKEQGVYMGDMPLMTTNGTFIVNGTERVIVSQMHRSPGVFFDHDKGKSHSSGKLLFAARVIPYRGSWLDIEFDAKDIIYARIDRRRKIPVTSLLMALGMDGSDILSTFYDKVTYERDGEGWRVPYSVDRFKGMKLISDLIDADSGEVVAEAGKKLTVRTAKSLAEKGLKAVKVSEDDLLGCYLAEDIVNYETGEIYLEAGDEIDEKVLKILLDVRADQINILDIDHMNIGAYIRNTLKVDKNESRQDALFDIYRVMRPGEPPTIDTAEAMFHSLFFDPERYDLSAVGRVKMNLRMDLDCPDTVRVLRQEDILAVVKMLVELRDGRGEIDDIDNLGNRRVRSVGELMENQYRIGLLRMERAIKERMSSVEIDTVMPQDLINAKPAAAAVREFFGSSQLSQFMDQTNPLSEITHKRRLSALGPGGLTRERAGFEVRDVHPTHYGRICPIETPEGPNIGLINSLATFARVNKYGFIESPYRKIIDGKVTKEVIYLSAMEEAKHYVAQANSSLDSEGRFTEEFVVCRHAGEVLMAPRDHVDLMDVSPKQLVSVAAALIPFLENDDANRALMGSNMQRQAVPLVRAEAPFVGTGMEAVVARDSGAAVSAKRSGIVDQVDATRIVIRATEDLDPSKSGVDIYRLQKFQRSNQSTCINQRPLVHVGDRVEKGDIIADGPSTDLGDLALGRNVLVAFMPWNGYNYEDSILLSERIVADDVFTSIHIEEFEVAARDTKLGPEEITRDIPNVAEEALRNLDEAGIIYIGAEVQPGDILVGKITPKGESPMTPEEKLLRAIFGEKASDVRDTSMRMPPGTFGTVVEVRVFNRHGVEKDERAMAIEREEIERLAKDRDDEQSILDRNVYARLTDMLTGKVAVEGPKGFSESKKLDSTVMGRYPRSQWWQFAVEDEKLQNEIEALRKQYDESKEALQRRFMDKVEKVQRGDEMPPGVMKMVKVFVAVKRKIQPGDKMAGRHGNKGVVSRILPVEDMPFLEDGTHADIVLNPLGVPSRMNVGQILETHLGWACAGMGKKIGDLLELYQETGDILPLRQRIENLMPDDNHNEPVRQYDNESLYKLALQMKKGVSIATPVFDGAHESDINMMLEDAGLDSSGQVTLYDGRTGEPFDRPVTVGYIYMLKLHHLVDDKIHARSIGPYSLVTQQPLGGKAQFGGQRFGEMEVWALEAYGAAYTLQEMLTVKSDDVAGRTKVYEAIVRGDDTFEAGIPESFNVLVKEMRSLALNVELDDARELIAQRVLSDRVEQ</sequence>
<accession>A9ISG1</accession>
<feature type="chain" id="PRO_1000086361" description="DNA-directed RNA polymerase subunit beta">
    <location>
        <begin position="1"/>
        <end position="1383"/>
    </location>
</feature>
<dbReference type="EC" id="2.7.7.6" evidence="1"/>
<dbReference type="EMBL" id="AM260525">
    <property type="protein sequence ID" value="CAK01298.1"/>
    <property type="molecule type" value="Genomic_DNA"/>
</dbReference>
<dbReference type="RefSeq" id="WP_012231479.1">
    <property type="nucleotide sequence ID" value="NC_010161.1"/>
</dbReference>
<dbReference type="SMR" id="A9ISG1"/>
<dbReference type="KEGG" id="btr:BT_0895"/>
<dbReference type="eggNOG" id="COG0085">
    <property type="taxonomic scope" value="Bacteria"/>
</dbReference>
<dbReference type="HOGENOM" id="CLU_000524_4_3_5"/>
<dbReference type="Proteomes" id="UP000001592">
    <property type="component" value="Chromosome"/>
</dbReference>
<dbReference type="GO" id="GO:0000428">
    <property type="term" value="C:DNA-directed RNA polymerase complex"/>
    <property type="evidence" value="ECO:0007669"/>
    <property type="project" value="UniProtKB-KW"/>
</dbReference>
<dbReference type="GO" id="GO:0003677">
    <property type="term" value="F:DNA binding"/>
    <property type="evidence" value="ECO:0007669"/>
    <property type="project" value="UniProtKB-UniRule"/>
</dbReference>
<dbReference type="GO" id="GO:0003899">
    <property type="term" value="F:DNA-directed RNA polymerase activity"/>
    <property type="evidence" value="ECO:0007669"/>
    <property type="project" value="UniProtKB-UniRule"/>
</dbReference>
<dbReference type="GO" id="GO:0032549">
    <property type="term" value="F:ribonucleoside binding"/>
    <property type="evidence" value="ECO:0007669"/>
    <property type="project" value="InterPro"/>
</dbReference>
<dbReference type="GO" id="GO:0006351">
    <property type="term" value="P:DNA-templated transcription"/>
    <property type="evidence" value="ECO:0007669"/>
    <property type="project" value="UniProtKB-UniRule"/>
</dbReference>
<dbReference type="CDD" id="cd00653">
    <property type="entry name" value="RNA_pol_B_RPB2"/>
    <property type="match status" value="1"/>
</dbReference>
<dbReference type="FunFam" id="2.40.50.100:FF:000006">
    <property type="entry name" value="DNA-directed RNA polymerase subunit beta"/>
    <property type="match status" value="1"/>
</dbReference>
<dbReference type="FunFam" id="3.90.1800.10:FF:000001">
    <property type="entry name" value="DNA-directed RNA polymerase subunit beta"/>
    <property type="match status" value="1"/>
</dbReference>
<dbReference type="Gene3D" id="2.40.50.100">
    <property type="match status" value="1"/>
</dbReference>
<dbReference type="Gene3D" id="2.40.50.150">
    <property type="match status" value="1"/>
</dbReference>
<dbReference type="Gene3D" id="3.90.1100.10">
    <property type="match status" value="2"/>
</dbReference>
<dbReference type="Gene3D" id="2.30.150.10">
    <property type="entry name" value="DNA-directed RNA polymerase, beta subunit, external 1 domain"/>
    <property type="match status" value="1"/>
</dbReference>
<dbReference type="Gene3D" id="2.40.270.10">
    <property type="entry name" value="DNA-directed RNA polymerase, subunit 2, domain 6"/>
    <property type="match status" value="1"/>
</dbReference>
<dbReference type="Gene3D" id="3.90.1800.10">
    <property type="entry name" value="RNA polymerase alpha subunit dimerisation domain"/>
    <property type="match status" value="1"/>
</dbReference>
<dbReference type="Gene3D" id="3.90.1110.10">
    <property type="entry name" value="RNA polymerase Rpb2, domain 2"/>
    <property type="match status" value="1"/>
</dbReference>
<dbReference type="HAMAP" id="MF_01321">
    <property type="entry name" value="RNApol_bact_RpoB"/>
    <property type="match status" value="1"/>
</dbReference>
<dbReference type="InterPro" id="IPR042107">
    <property type="entry name" value="DNA-dir_RNA_pol_bsu_ext_1_sf"/>
</dbReference>
<dbReference type="InterPro" id="IPR019462">
    <property type="entry name" value="DNA-dir_RNA_pol_bsu_external_1"/>
</dbReference>
<dbReference type="InterPro" id="IPR015712">
    <property type="entry name" value="DNA-dir_RNA_pol_su2"/>
</dbReference>
<dbReference type="InterPro" id="IPR007120">
    <property type="entry name" value="DNA-dir_RNAP_su2_dom"/>
</dbReference>
<dbReference type="InterPro" id="IPR037033">
    <property type="entry name" value="DNA-dir_RNAP_su2_hyb_sf"/>
</dbReference>
<dbReference type="InterPro" id="IPR010243">
    <property type="entry name" value="RNA_pol_bsu_bac"/>
</dbReference>
<dbReference type="InterPro" id="IPR007121">
    <property type="entry name" value="RNA_pol_bsu_CS"/>
</dbReference>
<dbReference type="InterPro" id="IPR007644">
    <property type="entry name" value="RNA_pol_bsu_protrusion"/>
</dbReference>
<dbReference type="InterPro" id="IPR007642">
    <property type="entry name" value="RNA_pol_Rpb2_2"/>
</dbReference>
<dbReference type="InterPro" id="IPR037034">
    <property type="entry name" value="RNA_pol_Rpb2_2_sf"/>
</dbReference>
<dbReference type="InterPro" id="IPR007645">
    <property type="entry name" value="RNA_pol_Rpb2_3"/>
</dbReference>
<dbReference type="InterPro" id="IPR007641">
    <property type="entry name" value="RNA_pol_Rpb2_7"/>
</dbReference>
<dbReference type="InterPro" id="IPR014724">
    <property type="entry name" value="RNA_pol_RPB2_OB-fold"/>
</dbReference>
<dbReference type="NCBIfam" id="NF001616">
    <property type="entry name" value="PRK00405.1"/>
    <property type="match status" value="1"/>
</dbReference>
<dbReference type="NCBIfam" id="TIGR02013">
    <property type="entry name" value="rpoB"/>
    <property type="match status" value="1"/>
</dbReference>
<dbReference type="PANTHER" id="PTHR20856">
    <property type="entry name" value="DNA-DIRECTED RNA POLYMERASE I SUBUNIT 2"/>
    <property type="match status" value="1"/>
</dbReference>
<dbReference type="Pfam" id="PF04563">
    <property type="entry name" value="RNA_pol_Rpb2_1"/>
    <property type="match status" value="1"/>
</dbReference>
<dbReference type="Pfam" id="PF04561">
    <property type="entry name" value="RNA_pol_Rpb2_2"/>
    <property type="match status" value="2"/>
</dbReference>
<dbReference type="Pfam" id="PF04565">
    <property type="entry name" value="RNA_pol_Rpb2_3"/>
    <property type="match status" value="1"/>
</dbReference>
<dbReference type="Pfam" id="PF10385">
    <property type="entry name" value="RNA_pol_Rpb2_45"/>
    <property type="match status" value="1"/>
</dbReference>
<dbReference type="Pfam" id="PF00562">
    <property type="entry name" value="RNA_pol_Rpb2_6"/>
    <property type="match status" value="1"/>
</dbReference>
<dbReference type="Pfam" id="PF04560">
    <property type="entry name" value="RNA_pol_Rpb2_7"/>
    <property type="match status" value="1"/>
</dbReference>
<dbReference type="SUPFAM" id="SSF64484">
    <property type="entry name" value="beta and beta-prime subunits of DNA dependent RNA-polymerase"/>
    <property type="match status" value="1"/>
</dbReference>
<dbReference type="PROSITE" id="PS01166">
    <property type="entry name" value="RNA_POL_BETA"/>
    <property type="match status" value="1"/>
</dbReference>